<evidence type="ECO:0000255" key="1">
    <source>
        <dbReference type="HAMAP-Rule" id="MF_00403"/>
    </source>
</evidence>
<evidence type="ECO:0000305" key="2"/>
<keyword id="KW-0687">Ribonucleoprotein</keyword>
<keyword id="KW-0689">Ribosomal protein</keyword>
<keyword id="KW-0694">RNA-binding</keyword>
<keyword id="KW-0699">rRNA-binding</keyword>
<name>RS12_PYRAR</name>
<protein>
    <recommendedName>
        <fullName evidence="1">Small ribosomal subunit protein uS12</fullName>
    </recommendedName>
    <alternativeName>
        <fullName evidence="2">30S ribosomal protein S12</fullName>
    </alternativeName>
</protein>
<accession>A4WNA3</accession>
<sequence length="147" mass="16411">MPGKKSPYGLFAGGKLKRKRKRFKWNDVTYKRKMLGLVEKYDPLEGAPMARGIVLEKVGVEARKPNAAVRKCVRVQLVKNGKVVTAFVPLDGSLNYINEHDEVVIERIGGPEGRSLGDIPGVRFKVIKVNGVSLWAIWSGKKQKPTR</sequence>
<gene>
    <name evidence="1" type="primary">rps12</name>
    <name type="ordered locus">Pars_2326</name>
</gene>
<dbReference type="EMBL" id="CP000660">
    <property type="protein sequence ID" value="ABP51870.1"/>
    <property type="molecule type" value="Genomic_DNA"/>
</dbReference>
<dbReference type="SMR" id="A4WNA3"/>
<dbReference type="STRING" id="340102.Pars_2326"/>
<dbReference type="KEGG" id="pas:Pars_2326"/>
<dbReference type="HOGENOM" id="CLU_115574_0_1_2"/>
<dbReference type="OrthoDB" id="45154at2157"/>
<dbReference type="PhylomeDB" id="A4WNA3"/>
<dbReference type="Proteomes" id="UP000001567">
    <property type="component" value="Chromosome"/>
</dbReference>
<dbReference type="GO" id="GO:0015935">
    <property type="term" value="C:small ribosomal subunit"/>
    <property type="evidence" value="ECO:0007669"/>
    <property type="project" value="InterPro"/>
</dbReference>
<dbReference type="GO" id="GO:0019843">
    <property type="term" value="F:rRNA binding"/>
    <property type="evidence" value="ECO:0007669"/>
    <property type="project" value="UniProtKB-UniRule"/>
</dbReference>
<dbReference type="GO" id="GO:0003735">
    <property type="term" value="F:structural constituent of ribosome"/>
    <property type="evidence" value="ECO:0007669"/>
    <property type="project" value="InterPro"/>
</dbReference>
<dbReference type="GO" id="GO:0006412">
    <property type="term" value="P:translation"/>
    <property type="evidence" value="ECO:0007669"/>
    <property type="project" value="UniProtKB-UniRule"/>
</dbReference>
<dbReference type="CDD" id="cd03367">
    <property type="entry name" value="Ribosomal_S23"/>
    <property type="match status" value="1"/>
</dbReference>
<dbReference type="FunFam" id="2.40.50.140:FF:000007">
    <property type="entry name" value="40S ribosomal protein S23"/>
    <property type="match status" value="1"/>
</dbReference>
<dbReference type="Gene3D" id="2.40.50.140">
    <property type="entry name" value="Nucleic acid-binding proteins"/>
    <property type="match status" value="1"/>
</dbReference>
<dbReference type="HAMAP" id="MF_00403_A">
    <property type="entry name" value="Ribosomal_uS12_A"/>
    <property type="match status" value="1"/>
</dbReference>
<dbReference type="InterPro" id="IPR012340">
    <property type="entry name" value="NA-bd_OB-fold"/>
</dbReference>
<dbReference type="InterPro" id="IPR006032">
    <property type="entry name" value="Ribosomal_uS12"/>
</dbReference>
<dbReference type="InterPro" id="IPR022863">
    <property type="entry name" value="Ribosomal_uS12_arc"/>
</dbReference>
<dbReference type="InterPro" id="IPR005680">
    <property type="entry name" value="Ribosomal_uS12_euk/arc"/>
</dbReference>
<dbReference type="NCBIfam" id="NF003254">
    <property type="entry name" value="PRK04211.1"/>
    <property type="match status" value="1"/>
</dbReference>
<dbReference type="NCBIfam" id="TIGR00982">
    <property type="entry name" value="uS12_E_A"/>
    <property type="match status" value="1"/>
</dbReference>
<dbReference type="PANTHER" id="PTHR11652">
    <property type="entry name" value="30S RIBOSOMAL PROTEIN S12 FAMILY MEMBER"/>
    <property type="match status" value="1"/>
</dbReference>
<dbReference type="Pfam" id="PF00164">
    <property type="entry name" value="Ribosom_S12_S23"/>
    <property type="match status" value="1"/>
</dbReference>
<dbReference type="PIRSF" id="PIRSF002133">
    <property type="entry name" value="Ribosomal_S12/S23"/>
    <property type="match status" value="1"/>
</dbReference>
<dbReference type="SUPFAM" id="SSF50249">
    <property type="entry name" value="Nucleic acid-binding proteins"/>
    <property type="match status" value="1"/>
</dbReference>
<comment type="function">
    <text evidence="1">With S4 and S5 plays an important role in translational accuracy. Located at the interface of the 30S and 50S subunits.</text>
</comment>
<comment type="subunit">
    <text evidence="1">Part of the 30S ribosomal subunit.</text>
</comment>
<comment type="similarity">
    <text evidence="1">Belongs to the universal ribosomal protein uS12 family.</text>
</comment>
<reference key="1">
    <citation type="submission" date="2007-04" db="EMBL/GenBank/DDBJ databases">
        <title>Complete sequence of Pyrobaculum arsenaticum DSM 13514.</title>
        <authorList>
            <consortium name="US DOE Joint Genome Institute"/>
            <person name="Copeland A."/>
            <person name="Lucas S."/>
            <person name="Lapidus A."/>
            <person name="Barry K."/>
            <person name="Glavina del Rio T."/>
            <person name="Dalin E."/>
            <person name="Tice H."/>
            <person name="Pitluck S."/>
            <person name="Chain P."/>
            <person name="Malfatti S."/>
            <person name="Shin M."/>
            <person name="Vergez L."/>
            <person name="Schmutz J."/>
            <person name="Larimer F."/>
            <person name="Land M."/>
            <person name="Hauser L."/>
            <person name="Kyrpides N."/>
            <person name="Mikhailova N."/>
            <person name="Cozen A.E."/>
            <person name="Fitz-Gibbon S.T."/>
            <person name="House C.H."/>
            <person name="Saltikov C."/>
            <person name="Lowe T.M."/>
            <person name="Richardson P."/>
        </authorList>
    </citation>
    <scope>NUCLEOTIDE SEQUENCE [LARGE SCALE GENOMIC DNA]</scope>
    <source>
        <strain>ATCC 700994 / DSM 13514 / JCM 11321 / PZ6</strain>
    </source>
</reference>
<proteinExistence type="inferred from homology"/>
<organism>
    <name type="scientific">Pyrobaculum arsenaticum (strain DSM 13514 / JCM 11321 / PZ6)</name>
    <dbReference type="NCBI Taxonomy" id="340102"/>
    <lineage>
        <taxon>Archaea</taxon>
        <taxon>Thermoproteota</taxon>
        <taxon>Thermoprotei</taxon>
        <taxon>Thermoproteales</taxon>
        <taxon>Thermoproteaceae</taxon>
        <taxon>Pyrobaculum</taxon>
    </lineage>
</organism>
<feature type="chain" id="PRO_0000296052" description="Small ribosomal subunit protein uS12">
    <location>
        <begin position="1"/>
        <end position="147"/>
    </location>
</feature>